<feature type="chain" id="PRO_0000151060" description="UPF0284 protein Saci_0020">
    <location>
        <begin position="1"/>
        <end position="340"/>
    </location>
</feature>
<accession>Q4JCM9</accession>
<reference key="1">
    <citation type="journal article" date="2005" name="J. Bacteriol.">
        <title>The genome of Sulfolobus acidocaldarius, a model organism of the Crenarchaeota.</title>
        <authorList>
            <person name="Chen L."/>
            <person name="Bruegger K."/>
            <person name="Skovgaard M."/>
            <person name="Redder P."/>
            <person name="She Q."/>
            <person name="Torarinsson E."/>
            <person name="Greve B."/>
            <person name="Awayez M."/>
            <person name="Zibat A."/>
            <person name="Klenk H.-P."/>
            <person name="Garrett R.A."/>
        </authorList>
    </citation>
    <scope>NUCLEOTIDE SEQUENCE [LARGE SCALE GENOMIC DNA]</scope>
    <source>
        <strain>ATCC 33909 / DSM 639 / JCM 8929 / NBRC 15157 / NCIMB 11770</strain>
    </source>
</reference>
<evidence type="ECO:0000255" key="1">
    <source>
        <dbReference type="HAMAP-Rule" id="MF_01086"/>
    </source>
</evidence>
<protein>
    <recommendedName>
        <fullName evidence="1">UPF0284 protein Saci_0020</fullName>
    </recommendedName>
</protein>
<gene>
    <name type="ordered locus">Saci_0020</name>
</gene>
<proteinExistence type="inferred from homology"/>
<sequence length="340" mass="36081">MNFIQEINGKISLNGNFAFILVIATTDVSLIPGITVAGATPELTHFTPAADAEFLIKEKCISINSVPVTPTGIPTPAIISRASLKLVNATKLVVNAGSRVKPKIPFIDVGGEPGGDIRKFSLTRETSQRILENSIILGEELANSYDFLVIGESIPAGTTTAMAVLLSLGYDAADKVSSASPVNPKDLKRKVVYEAIKDLPSDFLGKISKVSDPMLISVAGITIGFRKRVLLAGGTQMTAAAAIIKEIDKKIIQNISIGTTKWIIQDSSSDIVSISRQVGVPVMASLLDFSKSKYSGLRAYEEGFVKEGVGAGGSSIIALSKGFTPQDILVEIEKIYSKLI</sequence>
<dbReference type="EMBL" id="CP000077">
    <property type="protein sequence ID" value="AAY79451.1"/>
    <property type="molecule type" value="Genomic_DNA"/>
</dbReference>
<dbReference type="RefSeq" id="WP_011276951.1">
    <property type="nucleotide sequence ID" value="NC_007181.1"/>
</dbReference>
<dbReference type="SMR" id="Q4JCM9"/>
<dbReference type="STRING" id="330779.Saci_0020"/>
<dbReference type="GeneID" id="14550554"/>
<dbReference type="KEGG" id="sai:Saci_0020"/>
<dbReference type="PATRIC" id="fig|330779.12.peg.21"/>
<dbReference type="eggNOG" id="arCOG04272">
    <property type="taxonomic scope" value="Archaea"/>
</dbReference>
<dbReference type="HOGENOM" id="CLU_053134_0_0_2"/>
<dbReference type="Proteomes" id="UP000001018">
    <property type="component" value="Chromosome"/>
</dbReference>
<dbReference type="GO" id="GO:0008939">
    <property type="term" value="F:nicotinate-nucleotide-dimethylbenzimidazole phosphoribosyltransferase activity"/>
    <property type="evidence" value="ECO:0007669"/>
    <property type="project" value="InterPro"/>
</dbReference>
<dbReference type="CDD" id="cd02439">
    <property type="entry name" value="DMB-PRT_CobT"/>
    <property type="match status" value="1"/>
</dbReference>
<dbReference type="Gene3D" id="3.40.50.10210">
    <property type="match status" value="1"/>
</dbReference>
<dbReference type="HAMAP" id="MF_01086">
    <property type="entry name" value="UPF0284"/>
    <property type="match status" value="1"/>
</dbReference>
<dbReference type="InterPro" id="IPR003200">
    <property type="entry name" value="Nict_dMeBzImd_PRibTrfase"/>
</dbReference>
<dbReference type="InterPro" id="IPR002805">
    <property type="entry name" value="Nict_dMeBzImd_PRibTrfase_arc"/>
</dbReference>
<dbReference type="InterPro" id="IPR036087">
    <property type="entry name" value="Nict_dMeBzImd_PRibTrfase_sf"/>
</dbReference>
<dbReference type="NCBIfam" id="TIGR00303">
    <property type="entry name" value="nicotinate mononucleotide-dependent phosphoribosyltransferase CobT"/>
    <property type="match status" value="1"/>
</dbReference>
<dbReference type="NCBIfam" id="NF003368">
    <property type="entry name" value="PRK04447.1-1"/>
    <property type="match status" value="1"/>
</dbReference>
<dbReference type="NCBIfam" id="NF003372">
    <property type="entry name" value="PRK04447.1-5"/>
    <property type="match status" value="1"/>
</dbReference>
<dbReference type="PANTHER" id="PTHR38811">
    <property type="match status" value="1"/>
</dbReference>
<dbReference type="PANTHER" id="PTHR38811:SF1">
    <property type="entry name" value="UPF0284 PROTEIN SLL1500"/>
    <property type="match status" value="1"/>
</dbReference>
<dbReference type="Pfam" id="PF02277">
    <property type="entry name" value="DBI_PRT"/>
    <property type="match status" value="1"/>
</dbReference>
<dbReference type="SUPFAM" id="SSF52733">
    <property type="entry name" value="Nicotinate mononucleotide:5,6-dimethylbenzimidazole phosphoribosyltransferase (CobT)"/>
    <property type="match status" value="1"/>
</dbReference>
<organism>
    <name type="scientific">Sulfolobus acidocaldarius (strain ATCC 33909 / DSM 639 / JCM 8929 / NBRC 15157 / NCIMB 11770)</name>
    <dbReference type="NCBI Taxonomy" id="330779"/>
    <lineage>
        <taxon>Archaea</taxon>
        <taxon>Thermoproteota</taxon>
        <taxon>Thermoprotei</taxon>
        <taxon>Sulfolobales</taxon>
        <taxon>Sulfolobaceae</taxon>
        <taxon>Sulfolobus</taxon>
    </lineage>
</organism>
<name>Y020_SULAC</name>
<comment type="similarity">
    <text evidence="1">Belongs to the UPF0284 family.</text>
</comment>
<keyword id="KW-1185">Reference proteome</keyword>